<gene>
    <name evidence="1" type="primary">lepA</name>
    <name type="ordered locus">SPD_1060</name>
</gene>
<dbReference type="EC" id="3.6.5.n1" evidence="1"/>
<dbReference type="EMBL" id="CP000410">
    <property type="protein sequence ID" value="ABJ54524.1"/>
    <property type="molecule type" value="Genomic_DNA"/>
</dbReference>
<dbReference type="RefSeq" id="WP_001047216.1">
    <property type="nucleotide sequence ID" value="NZ_JAMLJR010000006.1"/>
</dbReference>
<dbReference type="SMR" id="Q04KB7"/>
<dbReference type="PaxDb" id="373153-SPD_1060"/>
<dbReference type="KEGG" id="spd:SPD_1060"/>
<dbReference type="eggNOG" id="COG0481">
    <property type="taxonomic scope" value="Bacteria"/>
</dbReference>
<dbReference type="HOGENOM" id="CLU_009995_3_3_9"/>
<dbReference type="BioCyc" id="SPNE373153:G1G6V-1150-MONOMER"/>
<dbReference type="Proteomes" id="UP000001452">
    <property type="component" value="Chromosome"/>
</dbReference>
<dbReference type="GO" id="GO:0005886">
    <property type="term" value="C:plasma membrane"/>
    <property type="evidence" value="ECO:0007669"/>
    <property type="project" value="UniProtKB-SubCell"/>
</dbReference>
<dbReference type="GO" id="GO:0005525">
    <property type="term" value="F:GTP binding"/>
    <property type="evidence" value="ECO:0007669"/>
    <property type="project" value="UniProtKB-UniRule"/>
</dbReference>
<dbReference type="GO" id="GO:0003924">
    <property type="term" value="F:GTPase activity"/>
    <property type="evidence" value="ECO:0007669"/>
    <property type="project" value="UniProtKB-UniRule"/>
</dbReference>
<dbReference type="GO" id="GO:0043022">
    <property type="term" value="F:ribosome binding"/>
    <property type="evidence" value="ECO:0007669"/>
    <property type="project" value="UniProtKB-UniRule"/>
</dbReference>
<dbReference type="GO" id="GO:0003746">
    <property type="term" value="F:translation elongation factor activity"/>
    <property type="evidence" value="ECO:0007669"/>
    <property type="project" value="UniProtKB-UniRule"/>
</dbReference>
<dbReference type="GO" id="GO:0045727">
    <property type="term" value="P:positive regulation of translation"/>
    <property type="evidence" value="ECO:0007669"/>
    <property type="project" value="UniProtKB-UniRule"/>
</dbReference>
<dbReference type="CDD" id="cd03699">
    <property type="entry name" value="EF4_II"/>
    <property type="match status" value="1"/>
</dbReference>
<dbReference type="CDD" id="cd16260">
    <property type="entry name" value="EF4_III"/>
    <property type="match status" value="1"/>
</dbReference>
<dbReference type="CDD" id="cd01890">
    <property type="entry name" value="LepA"/>
    <property type="match status" value="1"/>
</dbReference>
<dbReference type="CDD" id="cd03709">
    <property type="entry name" value="lepA_C"/>
    <property type="match status" value="1"/>
</dbReference>
<dbReference type="FunFam" id="3.40.50.300:FF:000078">
    <property type="entry name" value="Elongation factor 4"/>
    <property type="match status" value="1"/>
</dbReference>
<dbReference type="FunFam" id="2.40.30.10:FF:000015">
    <property type="entry name" value="Translation factor GUF1, mitochondrial"/>
    <property type="match status" value="1"/>
</dbReference>
<dbReference type="FunFam" id="3.30.70.240:FF:000007">
    <property type="entry name" value="Translation factor GUF1, mitochondrial"/>
    <property type="match status" value="1"/>
</dbReference>
<dbReference type="FunFam" id="3.30.70.2570:FF:000001">
    <property type="entry name" value="Translation factor GUF1, mitochondrial"/>
    <property type="match status" value="1"/>
</dbReference>
<dbReference type="FunFam" id="3.30.70.870:FF:000004">
    <property type="entry name" value="Translation factor GUF1, mitochondrial"/>
    <property type="match status" value="1"/>
</dbReference>
<dbReference type="Gene3D" id="3.30.70.240">
    <property type="match status" value="1"/>
</dbReference>
<dbReference type="Gene3D" id="3.30.70.2570">
    <property type="entry name" value="Elongation factor 4, C-terminal domain"/>
    <property type="match status" value="1"/>
</dbReference>
<dbReference type="Gene3D" id="3.30.70.870">
    <property type="entry name" value="Elongation Factor G (Translational Gtpase), domain 3"/>
    <property type="match status" value="1"/>
</dbReference>
<dbReference type="Gene3D" id="3.40.50.300">
    <property type="entry name" value="P-loop containing nucleotide triphosphate hydrolases"/>
    <property type="match status" value="1"/>
</dbReference>
<dbReference type="Gene3D" id="2.40.30.10">
    <property type="entry name" value="Translation factors"/>
    <property type="match status" value="1"/>
</dbReference>
<dbReference type="HAMAP" id="MF_00071">
    <property type="entry name" value="LepA"/>
    <property type="match status" value="1"/>
</dbReference>
<dbReference type="InterPro" id="IPR006297">
    <property type="entry name" value="EF-4"/>
</dbReference>
<dbReference type="InterPro" id="IPR035647">
    <property type="entry name" value="EFG_III/V"/>
</dbReference>
<dbReference type="InterPro" id="IPR000640">
    <property type="entry name" value="EFG_V-like"/>
</dbReference>
<dbReference type="InterPro" id="IPR004161">
    <property type="entry name" value="EFTu-like_2"/>
</dbReference>
<dbReference type="InterPro" id="IPR031157">
    <property type="entry name" value="G_TR_CS"/>
</dbReference>
<dbReference type="InterPro" id="IPR038363">
    <property type="entry name" value="LepA_C_sf"/>
</dbReference>
<dbReference type="InterPro" id="IPR013842">
    <property type="entry name" value="LepA_CTD"/>
</dbReference>
<dbReference type="InterPro" id="IPR035654">
    <property type="entry name" value="LepA_IV"/>
</dbReference>
<dbReference type="InterPro" id="IPR027417">
    <property type="entry name" value="P-loop_NTPase"/>
</dbReference>
<dbReference type="InterPro" id="IPR005225">
    <property type="entry name" value="Small_GTP-bd"/>
</dbReference>
<dbReference type="InterPro" id="IPR000795">
    <property type="entry name" value="T_Tr_GTP-bd_dom"/>
</dbReference>
<dbReference type="InterPro" id="IPR009000">
    <property type="entry name" value="Transl_B-barrel_sf"/>
</dbReference>
<dbReference type="NCBIfam" id="TIGR01393">
    <property type="entry name" value="lepA"/>
    <property type="match status" value="1"/>
</dbReference>
<dbReference type="NCBIfam" id="TIGR00231">
    <property type="entry name" value="small_GTP"/>
    <property type="match status" value="1"/>
</dbReference>
<dbReference type="PANTHER" id="PTHR43512:SF4">
    <property type="entry name" value="TRANSLATION FACTOR GUF1 HOMOLOG, CHLOROPLASTIC"/>
    <property type="match status" value="1"/>
</dbReference>
<dbReference type="PANTHER" id="PTHR43512">
    <property type="entry name" value="TRANSLATION FACTOR GUF1-RELATED"/>
    <property type="match status" value="1"/>
</dbReference>
<dbReference type="Pfam" id="PF00679">
    <property type="entry name" value="EFG_C"/>
    <property type="match status" value="1"/>
</dbReference>
<dbReference type="Pfam" id="PF00009">
    <property type="entry name" value="GTP_EFTU"/>
    <property type="match status" value="1"/>
</dbReference>
<dbReference type="Pfam" id="PF03144">
    <property type="entry name" value="GTP_EFTU_D2"/>
    <property type="match status" value="1"/>
</dbReference>
<dbReference type="Pfam" id="PF06421">
    <property type="entry name" value="LepA_C"/>
    <property type="match status" value="1"/>
</dbReference>
<dbReference type="PRINTS" id="PR00315">
    <property type="entry name" value="ELONGATNFCT"/>
</dbReference>
<dbReference type="SMART" id="SM00838">
    <property type="entry name" value="EFG_C"/>
    <property type="match status" value="1"/>
</dbReference>
<dbReference type="SUPFAM" id="SSF54980">
    <property type="entry name" value="EF-G C-terminal domain-like"/>
    <property type="match status" value="2"/>
</dbReference>
<dbReference type="SUPFAM" id="SSF52540">
    <property type="entry name" value="P-loop containing nucleoside triphosphate hydrolases"/>
    <property type="match status" value="1"/>
</dbReference>
<dbReference type="SUPFAM" id="SSF50447">
    <property type="entry name" value="Translation proteins"/>
    <property type="match status" value="1"/>
</dbReference>
<dbReference type="PROSITE" id="PS00301">
    <property type="entry name" value="G_TR_1"/>
    <property type="match status" value="1"/>
</dbReference>
<dbReference type="PROSITE" id="PS51722">
    <property type="entry name" value="G_TR_2"/>
    <property type="match status" value="1"/>
</dbReference>
<protein>
    <recommendedName>
        <fullName evidence="1">Elongation factor 4</fullName>
        <shortName evidence="1">EF-4</shortName>
        <ecNumber evidence="1">3.6.5.n1</ecNumber>
    </recommendedName>
    <alternativeName>
        <fullName evidence="1">Ribosomal back-translocase LepA</fullName>
    </alternativeName>
</protein>
<reference key="1">
    <citation type="journal article" date="2007" name="J. Bacteriol.">
        <title>Genome sequence of Avery's virulent serotype 2 strain D39 of Streptococcus pneumoniae and comparison with that of unencapsulated laboratory strain R6.</title>
        <authorList>
            <person name="Lanie J.A."/>
            <person name="Ng W.-L."/>
            <person name="Kazmierczak K.M."/>
            <person name="Andrzejewski T.M."/>
            <person name="Davidsen T.M."/>
            <person name="Wayne K.J."/>
            <person name="Tettelin H."/>
            <person name="Glass J.I."/>
            <person name="Winkler M.E."/>
        </authorList>
    </citation>
    <scope>NUCLEOTIDE SEQUENCE [LARGE SCALE GENOMIC DNA]</scope>
    <source>
        <strain>D39 / NCTC 7466</strain>
    </source>
</reference>
<accession>Q04KB7</accession>
<evidence type="ECO:0000255" key="1">
    <source>
        <dbReference type="HAMAP-Rule" id="MF_00071"/>
    </source>
</evidence>
<feature type="chain" id="PRO_1000032060" description="Elongation factor 4">
    <location>
        <begin position="1"/>
        <end position="607"/>
    </location>
</feature>
<feature type="domain" description="tr-type G">
    <location>
        <begin position="11"/>
        <end position="193"/>
    </location>
</feature>
<feature type="binding site" evidence="1">
    <location>
        <begin position="23"/>
        <end position="28"/>
    </location>
    <ligand>
        <name>GTP</name>
        <dbReference type="ChEBI" id="CHEBI:37565"/>
    </ligand>
</feature>
<feature type="binding site" evidence="1">
    <location>
        <begin position="140"/>
        <end position="143"/>
    </location>
    <ligand>
        <name>GTP</name>
        <dbReference type="ChEBI" id="CHEBI:37565"/>
    </ligand>
</feature>
<name>LEPA_STRP2</name>
<sequence length="607" mass="67609">MNLEELKKRQGKIRNFSIIAHIDHGKSTLADRILEKTETVSSREMQAQLLDSMDLERERGITIKLNAIELNYTAKDGETYIFHLIDTPGHVDFTYEVSRSLAACEGAILVVDAAQGIEAQTLANVYLALDNDLEIMPIINKIDLPAADPERVRTEIEDVIGLDASEAVLASAKAGIGIEEILEQIVEKVPAPTGDVTAPLKALIFDSVYDAYRGVILQVRVMDGVVKPGDKIQLMSNSKTFDVAEVGIFTPKAVGRDFLATGDVGYIAASIKTVQDTRVGDTVTLATNPAAEPLHGYKQMNPMVFAGLYPIESNKYNDLREALEKLQLNDASLQFEPETSQALGFGFRCGFLGLLHMDVIQERLEREFNIDLIMTAPSVIYKVNLTDGESMDVSNPSEFPDPTKIATIEEPYVKAQIMVPQEFVGAVMELAQRKRGDFVTMDYIDDNRVNVIYQIPLAEIVFDFFDKLKSSTRGYASFDYELSEYRPSKLVKMDILLNGDKVDALSFIVHKDFAYERGKLIVDKLKKIIPRQQFEVPIQAAIGHKIVARTDIKALRKNVLAKCYGGDVSRKRKLLEKQKAGKKRMKSIGSVEVPQEAFLSVLSMDEE</sequence>
<comment type="function">
    <text evidence="1">Required for accurate and efficient protein synthesis under certain stress conditions. May act as a fidelity factor of the translation reaction, by catalyzing a one-codon backward translocation of tRNAs on improperly translocated ribosomes. Back-translocation proceeds from a post-translocation (POST) complex to a pre-translocation (PRE) complex, thus giving elongation factor G a second chance to translocate the tRNAs correctly. Binds to ribosomes in a GTP-dependent manner.</text>
</comment>
<comment type="catalytic activity">
    <reaction evidence="1">
        <text>GTP + H2O = GDP + phosphate + H(+)</text>
        <dbReference type="Rhea" id="RHEA:19669"/>
        <dbReference type="ChEBI" id="CHEBI:15377"/>
        <dbReference type="ChEBI" id="CHEBI:15378"/>
        <dbReference type="ChEBI" id="CHEBI:37565"/>
        <dbReference type="ChEBI" id="CHEBI:43474"/>
        <dbReference type="ChEBI" id="CHEBI:58189"/>
        <dbReference type="EC" id="3.6.5.n1"/>
    </reaction>
</comment>
<comment type="subcellular location">
    <subcellularLocation>
        <location evidence="1">Cell membrane</location>
        <topology evidence="1">Peripheral membrane protein</topology>
        <orientation evidence="1">Cytoplasmic side</orientation>
    </subcellularLocation>
</comment>
<comment type="similarity">
    <text evidence="1">Belongs to the TRAFAC class translation factor GTPase superfamily. Classic translation factor GTPase family. LepA subfamily.</text>
</comment>
<proteinExistence type="inferred from homology"/>
<keyword id="KW-1003">Cell membrane</keyword>
<keyword id="KW-0342">GTP-binding</keyword>
<keyword id="KW-0378">Hydrolase</keyword>
<keyword id="KW-0472">Membrane</keyword>
<keyword id="KW-0547">Nucleotide-binding</keyword>
<keyword id="KW-0648">Protein biosynthesis</keyword>
<keyword id="KW-1185">Reference proteome</keyword>
<organism>
    <name type="scientific">Streptococcus pneumoniae serotype 2 (strain D39 / NCTC 7466)</name>
    <dbReference type="NCBI Taxonomy" id="373153"/>
    <lineage>
        <taxon>Bacteria</taxon>
        <taxon>Bacillati</taxon>
        <taxon>Bacillota</taxon>
        <taxon>Bacilli</taxon>
        <taxon>Lactobacillales</taxon>
        <taxon>Streptococcaceae</taxon>
        <taxon>Streptococcus</taxon>
    </lineage>
</organism>